<feature type="chain" id="PRO_1000073459" description="2-aminoethylphosphonate--pyruvate transaminase">
    <location>
        <begin position="1"/>
        <end position="367"/>
    </location>
</feature>
<feature type="modified residue" description="N6-(pyridoxal phosphate)lysine" evidence="1">
    <location>
        <position position="193"/>
    </location>
</feature>
<reference key="1">
    <citation type="submission" date="2007-03" db="EMBL/GenBank/DDBJ databases">
        <authorList>
            <person name="Heidelberg J."/>
        </authorList>
    </citation>
    <scope>NUCLEOTIDE SEQUENCE [LARGE SCALE GENOMIC DNA]</scope>
    <source>
        <strain>ATCC 39541 / Classical Ogawa 395 / O395</strain>
    </source>
</reference>
<reference key="2">
    <citation type="journal article" date="2008" name="PLoS ONE">
        <title>A recalibrated molecular clock and independent origins for the cholera pandemic clones.</title>
        <authorList>
            <person name="Feng L."/>
            <person name="Reeves P.R."/>
            <person name="Lan R."/>
            <person name="Ren Y."/>
            <person name="Gao C."/>
            <person name="Zhou Z."/>
            <person name="Ren Y."/>
            <person name="Cheng J."/>
            <person name="Wang W."/>
            <person name="Wang J."/>
            <person name="Qian W."/>
            <person name="Li D."/>
            <person name="Wang L."/>
        </authorList>
    </citation>
    <scope>NUCLEOTIDE SEQUENCE [LARGE SCALE GENOMIC DNA]</scope>
    <source>
        <strain>ATCC 39541 / Classical Ogawa 395 / O395</strain>
    </source>
</reference>
<name>PHNW_VIBC3</name>
<dbReference type="EC" id="2.6.1.37" evidence="1"/>
<dbReference type="EMBL" id="CP000626">
    <property type="protein sequence ID" value="ABQ18682.1"/>
    <property type="molecule type" value="Genomic_DNA"/>
</dbReference>
<dbReference type="EMBL" id="CP001236">
    <property type="protein sequence ID" value="ACP11545.1"/>
    <property type="molecule type" value="Genomic_DNA"/>
</dbReference>
<dbReference type="RefSeq" id="WP_000786490.1">
    <property type="nucleotide sequence ID" value="NZ_JAACZH010000032.1"/>
</dbReference>
<dbReference type="SMR" id="A5F049"/>
<dbReference type="KEGG" id="vco:VC0395_0546"/>
<dbReference type="KEGG" id="vcr:VC395_A0711"/>
<dbReference type="PATRIC" id="fig|345073.21.peg.3445"/>
<dbReference type="eggNOG" id="COG0075">
    <property type="taxonomic scope" value="Bacteria"/>
</dbReference>
<dbReference type="HOGENOM" id="CLU_027686_3_1_6"/>
<dbReference type="OrthoDB" id="9766472at2"/>
<dbReference type="Proteomes" id="UP000000249">
    <property type="component" value="Chromosome 1"/>
</dbReference>
<dbReference type="GO" id="GO:0047304">
    <property type="term" value="F:2-aminoethylphosphonate-pyruvate transaminase activity"/>
    <property type="evidence" value="ECO:0007669"/>
    <property type="project" value="UniProtKB-UniRule"/>
</dbReference>
<dbReference type="GO" id="GO:0019700">
    <property type="term" value="P:organic phosphonate catabolic process"/>
    <property type="evidence" value="ECO:0007669"/>
    <property type="project" value="InterPro"/>
</dbReference>
<dbReference type="FunFam" id="3.40.640.10:FF:000183">
    <property type="entry name" value="2-aminoethylphosphonate--pyruvate transaminase"/>
    <property type="match status" value="1"/>
</dbReference>
<dbReference type="Gene3D" id="3.90.1150.10">
    <property type="entry name" value="Aspartate Aminotransferase, domain 1"/>
    <property type="match status" value="1"/>
</dbReference>
<dbReference type="Gene3D" id="3.40.640.10">
    <property type="entry name" value="Type I PLP-dependent aspartate aminotransferase-like (Major domain)"/>
    <property type="match status" value="1"/>
</dbReference>
<dbReference type="HAMAP" id="MF_01376">
    <property type="entry name" value="PhnW_aminotrans_5"/>
    <property type="match status" value="1"/>
</dbReference>
<dbReference type="InterPro" id="IPR000192">
    <property type="entry name" value="Aminotrans_V_dom"/>
</dbReference>
<dbReference type="InterPro" id="IPR012703">
    <property type="entry name" value="NH2EtPonate_pyrv_transaminase"/>
</dbReference>
<dbReference type="InterPro" id="IPR015424">
    <property type="entry name" value="PyrdxlP-dep_Trfase"/>
</dbReference>
<dbReference type="InterPro" id="IPR015421">
    <property type="entry name" value="PyrdxlP-dep_Trfase_major"/>
</dbReference>
<dbReference type="InterPro" id="IPR015422">
    <property type="entry name" value="PyrdxlP-dep_Trfase_small"/>
</dbReference>
<dbReference type="InterPro" id="IPR024169">
    <property type="entry name" value="SP_NH2Trfase/AEP_transaminase"/>
</dbReference>
<dbReference type="NCBIfam" id="TIGR03301">
    <property type="entry name" value="PhnW-AepZ"/>
    <property type="match status" value="1"/>
</dbReference>
<dbReference type="NCBIfam" id="NF010006">
    <property type="entry name" value="PRK13479.1"/>
    <property type="match status" value="1"/>
</dbReference>
<dbReference type="NCBIfam" id="TIGR02326">
    <property type="entry name" value="transamin_PhnW"/>
    <property type="match status" value="1"/>
</dbReference>
<dbReference type="PANTHER" id="PTHR42778">
    <property type="entry name" value="2-AMINOETHYLPHOSPHONATE--PYRUVATE TRANSAMINASE"/>
    <property type="match status" value="1"/>
</dbReference>
<dbReference type="PANTHER" id="PTHR42778:SF1">
    <property type="entry name" value="2-AMINOETHYLPHOSPHONATE--PYRUVATE TRANSAMINASE"/>
    <property type="match status" value="1"/>
</dbReference>
<dbReference type="Pfam" id="PF00266">
    <property type="entry name" value="Aminotran_5"/>
    <property type="match status" value="1"/>
</dbReference>
<dbReference type="PIRSF" id="PIRSF000524">
    <property type="entry name" value="SPT"/>
    <property type="match status" value="1"/>
</dbReference>
<dbReference type="SUPFAM" id="SSF53383">
    <property type="entry name" value="PLP-dependent transferases"/>
    <property type="match status" value="1"/>
</dbReference>
<protein>
    <recommendedName>
        <fullName evidence="1">2-aminoethylphosphonate--pyruvate transaminase</fullName>
        <ecNumber evidence="1">2.6.1.37</ecNumber>
    </recommendedName>
    <alternativeName>
        <fullName evidence="1">2-aminoethylphosphonate aminotransferase</fullName>
    </alternativeName>
    <alternativeName>
        <fullName evidence="1">AEP transaminase</fullName>
        <shortName evidence="1">AEPT</shortName>
    </alternativeName>
</protein>
<keyword id="KW-0032">Aminotransferase</keyword>
<keyword id="KW-0663">Pyridoxal phosphate</keyword>
<keyword id="KW-0670">Pyruvate</keyword>
<keyword id="KW-0808">Transferase</keyword>
<gene>
    <name evidence="1" type="primary">phnW</name>
    <name type="ordered locus">VC0395_0546</name>
    <name type="ordered locus">VC395_A0711</name>
</gene>
<sequence>MKNAYLLLTPGPLSTSESVREAMLKDWCTWDDDYNLEIVEVIRRKLVTLATTQSGYTSVLMQGSGTASVEATIGSVMLPTDKLLVIDNGAYGARIAQIAQYLNIACRVIAPGETAQPNLDEIADVLTHDPAITHVAIVHCETTTGMLNPIAEVAKIAKQHGKRVILDAMSSFGGIPMDIGALGIDFMISSANKCIQGVPGFGFVIAKRSELEQCQGRARSLTLDLFDQWQCMEKNHGKWRFTSPTHTVRAFYQALLELESEGGIAARYQRYQTNQTQLVKGMRELGFAPLLPEKLHSPIITSFYSPEHSDYQFAEFYQRLKQQGFVIYPGKVSHADCFRIGNIGEVYPQDIERLLSAMQHAIYWQQA</sequence>
<comment type="function">
    <text evidence="1">Involved in phosphonate degradation.</text>
</comment>
<comment type="catalytic activity">
    <reaction evidence="1">
        <text>(2-aminoethyl)phosphonate + pyruvate = phosphonoacetaldehyde + L-alanine</text>
        <dbReference type="Rhea" id="RHEA:17021"/>
        <dbReference type="ChEBI" id="CHEBI:15361"/>
        <dbReference type="ChEBI" id="CHEBI:57418"/>
        <dbReference type="ChEBI" id="CHEBI:57972"/>
        <dbReference type="ChEBI" id="CHEBI:58383"/>
        <dbReference type="EC" id="2.6.1.37"/>
    </reaction>
</comment>
<comment type="cofactor">
    <cofactor evidence="1">
        <name>pyridoxal 5'-phosphate</name>
        <dbReference type="ChEBI" id="CHEBI:597326"/>
    </cofactor>
</comment>
<comment type="subunit">
    <text evidence="1">Homodimer.</text>
</comment>
<comment type="similarity">
    <text evidence="1">Belongs to the class-V pyridoxal-phosphate-dependent aminotransferase family. PhnW subfamily.</text>
</comment>
<proteinExistence type="inferred from homology"/>
<organism>
    <name type="scientific">Vibrio cholerae serotype O1 (strain ATCC 39541 / Classical Ogawa 395 / O395)</name>
    <dbReference type="NCBI Taxonomy" id="345073"/>
    <lineage>
        <taxon>Bacteria</taxon>
        <taxon>Pseudomonadati</taxon>
        <taxon>Pseudomonadota</taxon>
        <taxon>Gammaproteobacteria</taxon>
        <taxon>Vibrionales</taxon>
        <taxon>Vibrionaceae</taxon>
        <taxon>Vibrio</taxon>
    </lineage>
</organism>
<evidence type="ECO:0000255" key="1">
    <source>
        <dbReference type="HAMAP-Rule" id="MF_01376"/>
    </source>
</evidence>
<accession>A5F049</accession>
<accession>C3M5Y2</accession>